<sequence length="238" mass="25887">MNARAAAVAELERRIGYVFTDRDLLERALTHASVGDGARAVRHNERLEFLGDRVLNLCAAERLMALDPDAREGEMSRLLASLVNYHACARAAKRAGLQEALRLSASATKVGARKSDAVLGDACEALIAALYIDGGLETARAFFLKFWDEEFARLDEPRAKDPKTQLQEWVQGMGLPLPTYEIVSQEGPPHAPSFTVEVQVAGFGAERGEGRSRQAAEKAAAQCMLLKREGPEPGKVGE</sequence>
<keyword id="KW-0963">Cytoplasm</keyword>
<keyword id="KW-0255">Endonuclease</keyword>
<keyword id="KW-0378">Hydrolase</keyword>
<keyword id="KW-0460">Magnesium</keyword>
<keyword id="KW-0479">Metal-binding</keyword>
<keyword id="KW-0507">mRNA processing</keyword>
<keyword id="KW-0540">Nuclease</keyword>
<keyword id="KW-1185">Reference proteome</keyword>
<keyword id="KW-0694">RNA-binding</keyword>
<keyword id="KW-0698">rRNA processing</keyword>
<keyword id="KW-0699">rRNA-binding</keyword>
<keyword id="KW-0819">tRNA processing</keyword>
<reference key="1">
    <citation type="journal article" date="2008" name="BMC Genomics">
        <title>Complete genome of Phenylobacterium zucineum - a novel facultative intracellular bacterium isolated from human erythroleukemia cell line K562.</title>
        <authorList>
            <person name="Luo Y."/>
            <person name="Xu X."/>
            <person name="Ding Z."/>
            <person name="Liu Z."/>
            <person name="Zhang B."/>
            <person name="Yan Z."/>
            <person name="Sun J."/>
            <person name="Hu S."/>
            <person name="Hu X."/>
        </authorList>
    </citation>
    <scope>NUCLEOTIDE SEQUENCE [LARGE SCALE GENOMIC DNA]</scope>
    <source>
        <strain>HLK1</strain>
    </source>
</reference>
<gene>
    <name evidence="1" type="primary">rnc</name>
    <name type="ordered locus">PHZ_c1870</name>
</gene>
<protein>
    <recommendedName>
        <fullName evidence="1">Ribonuclease 3</fullName>
        <ecNumber evidence="1">3.1.26.3</ecNumber>
    </recommendedName>
    <alternativeName>
        <fullName evidence="1">Ribonuclease III</fullName>
        <shortName evidence="1">RNase III</shortName>
    </alternativeName>
</protein>
<accession>B4RCU4</accession>
<evidence type="ECO:0000255" key="1">
    <source>
        <dbReference type="HAMAP-Rule" id="MF_00104"/>
    </source>
</evidence>
<dbReference type="EC" id="3.1.26.3" evidence="1"/>
<dbReference type="EMBL" id="CP000747">
    <property type="protein sequence ID" value="ACG78281.1"/>
    <property type="molecule type" value="Genomic_DNA"/>
</dbReference>
<dbReference type="RefSeq" id="WP_012522423.1">
    <property type="nucleotide sequence ID" value="NC_011144.1"/>
</dbReference>
<dbReference type="SMR" id="B4RCU4"/>
<dbReference type="STRING" id="450851.PHZ_c1870"/>
<dbReference type="KEGG" id="pzu:PHZ_c1870"/>
<dbReference type="eggNOG" id="COG0571">
    <property type="taxonomic scope" value="Bacteria"/>
</dbReference>
<dbReference type="HOGENOM" id="CLU_000907_1_1_5"/>
<dbReference type="OrthoDB" id="9805026at2"/>
<dbReference type="Proteomes" id="UP000001868">
    <property type="component" value="Chromosome"/>
</dbReference>
<dbReference type="GO" id="GO:0005737">
    <property type="term" value="C:cytoplasm"/>
    <property type="evidence" value="ECO:0007669"/>
    <property type="project" value="UniProtKB-SubCell"/>
</dbReference>
<dbReference type="GO" id="GO:0003725">
    <property type="term" value="F:double-stranded RNA binding"/>
    <property type="evidence" value="ECO:0007669"/>
    <property type="project" value="TreeGrafter"/>
</dbReference>
<dbReference type="GO" id="GO:0046872">
    <property type="term" value="F:metal ion binding"/>
    <property type="evidence" value="ECO:0007669"/>
    <property type="project" value="UniProtKB-KW"/>
</dbReference>
<dbReference type="GO" id="GO:0004525">
    <property type="term" value="F:ribonuclease III activity"/>
    <property type="evidence" value="ECO:0007669"/>
    <property type="project" value="UniProtKB-UniRule"/>
</dbReference>
<dbReference type="GO" id="GO:0019843">
    <property type="term" value="F:rRNA binding"/>
    <property type="evidence" value="ECO:0007669"/>
    <property type="project" value="UniProtKB-KW"/>
</dbReference>
<dbReference type="GO" id="GO:0006397">
    <property type="term" value="P:mRNA processing"/>
    <property type="evidence" value="ECO:0007669"/>
    <property type="project" value="UniProtKB-UniRule"/>
</dbReference>
<dbReference type="GO" id="GO:0010468">
    <property type="term" value="P:regulation of gene expression"/>
    <property type="evidence" value="ECO:0007669"/>
    <property type="project" value="TreeGrafter"/>
</dbReference>
<dbReference type="GO" id="GO:0006364">
    <property type="term" value="P:rRNA processing"/>
    <property type="evidence" value="ECO:0007669"/>
    <property type="project" value="UniProtKB-UniRule"/>
</dbReference>
<dbReference type="GO" id="GO:0008033">
    <property type="term" value="P:tRNA processing"/>
    <property type="evidence" value="ECO:0007669"/>
    <property type="project" value="UniProtKB-KW"/>
</dbReference>
<dbReference type="CDD" id="cd10845">
    <property type="entry name" value="DSRM_RNAse_III_family"/>
    <property type="match status" value="1"/>
</dbReference>
<dbReference type="CDD" id="cd00593">
    <property type="entry name" value="RIBOc"/>
    <property type="match status" value="1"/>
</dbReference>
<dbReference type="FunFam" id="1.10.1520.10:FF:000001">
    <property type="entry name" value="Ribonuclease 3"/>
    <property type="match status" value="1"/>
</dbReference>
<dbReference type="FunFam" id="3.30.160.20:FF:000003">
    <property type="entry name" value="Ribonuclease 3"/>
    <property type="match status" value="1"/>
</dbReference>
<dbReference type="Gene3D" id="3.30.160.20">
    <property type="match status" value="1"/>
</dbReference>
<dbReference type="Gene3D" id="1.10.1520.10">
    <property type="entry name" value="Ribonuclease III domain"/>
    <property type="match status" value="1"/>
</dbReference>
<dbReference type="HAMAP" id="MF_00104">
    <property type="entry name" value="RNase_III"/>
    <property type="match status" value="1"/>
</dbReference>
<dbReference type="InterPro" id="IPR014720">
    <property type="entry name" value="dsRBD_dom"/>
</dbReference>
<dbReference type="InterPro" id="IPR011907">
    <property type="entry name" value="RNase_III"/>
</dbReference>
<dbReference type="InterPro" id="IPR000999">
    <property type="entry name" value="RNase_III_dom"/>
</dbReference>
<dbReference type="InterPro" id="IPR036389">
    <property type="entry name" value="RNase_III_sf"/>
</dbReference>
<dbReference type="NCBIfam" id="TIGR02191">
    <property type="entry name" value="RNaseIII"/>
    <property type="match status" value="1"/>
</dbReference>
<dbReference type="PANTHER" id="PTHR11207:SF0">
    <property type="entry name" value="RIBONUCLEASE 3"/>
    <property type="match status" value="1"/>
</dbReference>
<dbReference type="PANTHER" id="PTHR11207">
    <property type="entry name" value="RIBONUCLEASE III"/>
    <property type="match status" value="1"/>
</dbReference>
<dbReference type="Pfam" id="PF00035">
    <property type="entry name" value="dsrm"/>
    <property type="match status" value="1"/>
</dbReference>
<dbReference type="Pfam" id="PF14622">
    <property type="entry name" value="Ribonucleas_3_3"/>
    <property type="match status" value="1"/>
</dbReference>
<dbReference type="SMART" id="SM00358">
    <property type="entry name" value="DSRM"/>
    <property type="match status" value="1"/>
</dbReference>
<dbReference type="SMART" id="SM00535">
    <property type="entry name" value="RIBOc"/>
    <property type="match status" value="1"/>
</dbReference>
<dbReference type="SUPFAM" id="SSF54768">
    <property type="entry name" value="dsRNA-binding domain-like"/>
    <property type="match status" value="1"/>
</dbReference>
<dbReference type="SUPFAM" id="SSF69065">
    <property type="entry name" value="RNase III domain-like"/>
    <property type="match status" value="1"/>
</dbReference>
<dbReference type="PROSITE" id="PS50137">
    <property type="entry name" value="DS_RBD"/>
    <property type="match status" value="1"/>
</dbReference>
<dbReference type="PROSITE" id="PS00517">
    <property type="entry name" value="RNASE_3_1"/>
    <property type="match status" value="1"/>
</dbReference>
<dbReference type="PROSITE" id="PS50142">
    <property type="entry name" value="RNASE_3_2"/>
    <property type="match status" value="1"/>
</dbReference>
<comment type="function">
    <text evidence="1">Digests double-stranded RNA. Involved in the processing of primary rRNA transcript to yield the immediate precursors to the large and small rRNAs (23S and 16S). Processes some mRNAs, and tRNAs when they are encoded in the rRNA operon. Processes pre-crRNA and tracrRNA of type II CRISPR loci if present in the organism.</text>
</comment>
<comment type="catalytic activity">
    <reaction evidence="1">
        <text>Endonucleolytic cleavage to 5'-phosphomonoester.</text>
        <dbReference type="EC" id="3.1.26.3"/>
    </reaction>
</comment>
<comment type="cofactor">
    <cofactor evidence="1">
        <name>Mg(2+)</name>
        <dbReference type="ChEBI" id="CHEBI:18420"/>
    </cofactor>
</comment>
<comment type="subunit">
    <text evidence="1">Homodimer.</text>
</comment>
<comment type="subcellular location">
    <subcellularLocation>
        <location evidence="1">Cytoplasm</location>
    </subcellularLocation>
</comment>
<comment type="similarity">
    <text evidence="1">Belongs to the ribonuclease III family.</text>
</comment>
<name>RNC_PHEZH</name>
<organism>
    <name type="scientific">Phenylobacterium zucineum (strain HLK1)</name>
    <dbReference type="NCBI Taxonomy" id="450851"/>
    <lineage>
        <taxon>Bacteria</taxon>
        <taxon>Pseudomonadati</taxon>
        <taxon>Pseudomonadota</taxon>
        <taxon>Alphaproteobacteria</taxon>
        <taxon>Caulobacterales</taxon>
        <taxon>Caulobacteraceae</taxon>
        <taxon>Phenylobacterium</taxon>
    </lineage>
</organism>
<proteinExistence type="inferred from homology"/>
<feature type="chain" id="PRO_1000094123" description="Ribonuclease 3">
    <location>
        <begin position="1"/>
        <end position="238"/>
    </location>
</feature>
<feature type="domain" description="RNase III" evidence="1">
    <location>
        <begin position="8"/>
        <end position="135"/>
    </location>
</feature>
<feature type="domain" description="DRBM" evidence="1">
    <location>
        <begin position="161"/>
        <end position="230"/>
    </location>
</feature>
<feature type="active site" evidence="1">
    <location>
        <position position="52"/>
    </location>
</feature>
<feature type="active site" evidence="1">
    <location>
        <position position="124"/>
    </location>
</feature>
<feature type="binding site" evidence="1">
    <location>
        <position position="48"/>
    </location>
    <ligand>
        <name>Mg(2+)</name>
        <dbReference type="ChEBI" id="CHEBI:18420"/>
    </ligand>
</feature>
<feature type="binding site" evidence="1">
    <location>
        <position position="121"/>
    </location>
    <ligand>
        <name>Mg(2+)</name>
        <dbReference type="ChEBI" id="CHEBI:18420"/>
    </ligand>
</feature>
<feature type="binding site" evidence="1">
    <location>
        <position position="124"/>
    </location>
    <ligand>
        <name>Mg(2+)</name>
        <dbReference type="ChEBI" id="CHEBI:18420"/>
    </ligand>
</feature>